<comment type="function">
    <text evidence="1">One of the proteins required for the normal export of preproteins out of the cell cytoplasm. It is a molecular chaperone that binds to a subset of precursor proteins, maintaining them in a translocation-competent state. It also specifically binds to its receptor SecA.</text>
</comment>
<comment type="subunit">
    <text evidence="1">Homotetramer, a dimer of dimers. One homotetramer interacts with 1 SecA dimer.</text>
</comment>
<comment type="subcellular location">
    <subcellularLocation>
        <location evidence="1">Cytoplasm</location>
    </subcellularLocation>
</comment>
<comment type="similarity">
    <text evidence="1">Belongs to the SecB family.</text>
</comment>
<comment type="sequence caution" evidence="2">
    <conflict type="erroneous initiation">
        <sequence resource="EMBL-CDS" id="ABU79299"/>
    </conflict>
</comment>
<sequence length="155" mass="17252">MSEQNNTEMNFQLLRIYTKDISFEAPNAPHVFQKDWQPEVKLDLDTASSQLADDVYEVVLRVTVTASLGEETAFLCEVQQAGIFNISGIEGTQMAHCLGAYCPNSLFPYARECITNLVSRGTFPQLNLAPVNFDALFMNYLQQQAAEGAPNHQDA</sequence>
<name>SECB_CROS8</name>
<protein>
    <recommendedName>
        <fullName evidence="1">Protein-export protein SecB</fullName>
    </recommendedName>
</protein>
<proteinExistence type="inferred from homology"/>
<gene>
    <name evidence="1" type="primary">secB</name>
    <name type="ordered locus">ESA_04118</name>
</gene>
<keyword id="KW-0143">Chaperone</keyword>
<keyword id="KW-0963">Cytoplasm</keyword>
<keyword id="KW-0653">Protein transport</keyword>
<keyword id="KW-1185">Reference proteome</keyword>
<keyword id="KW-0811">Translocation</keyword>
<keyword id="KW-0813">Transport</keyword>
<dbReference type="EMBL" id="CP000783">
    <property type="protein sequence ID" value="ABU79299.1"/>
    <property type="status" value="ALT_INIT"/>
    <property type="molecule type" value="Genomic_DNA"/>
</dbReference>
<dbReference type="RefSeq" id="WP_004388493.1">
    <property type="nucleotide sequence ID" value="NC_009778.1"/>
</dbReference>
<dbReference type="SMR" id="A7MID6"/>
<dbReference type="KEGG" id="esa:ESA_04118"/>
<dbReference type="PATRIC" id="fig|290339.8.peg.3660"/>
<dbReference type="HOGENOM" id="CLU_111574_1_0_6"/>
<dbReference type="Proteomes" id="UP000000260">
    <property type="component" value="Chromosome"/>
</dbReference>
<dbReference type="GO" id="GO:0005737">
    <property type="term" value="C:cytoplasm"/>
    <property type="evidence" value="ECO:0007669"/>
    <property type="project" value="UniProtKB-SubCell"/>
</dbReference>
<dbReference type="GO" id="GO:0051082">
    <property type="term" value="F:unfolded protein binding"/>
    <property type="evidence" value="ECO:0007669"/>
    <property type="project" value="InterPro"/>
</dbReference>
<dbReference type="GO" id="GO:0006457">
    <property type="term" value="P:protein folding"/>
    <property type="evidence" value="ECO:0007669"/>
    <property type="project" value="UniProtKB-UniRule"/>
</dbReference>
<dbReference type="GO" id="GO:0051262">
    <property type="term" value="P:protein tetramerization"/>
    <property type="evidence" value="ECO:0007669"/>
    <property type="project" value="InterPro"/>
</dbReference>
<dbReference type="GO" id="GO:0015031">
    <property type="term" value="P:protein transport"/>
    <property type="evidence" value="ECO:0007669"/>
    <property type="project" value="UniProtKB-UniRule"/>
</dbReference>
<dbReference type="CDD" id="cd00557">
    <property type="entry name" value="Translocase_SecB"/>
    <property type="match status" value="1"/>
</dbReference>
<dbReference type="FunFam" id="3.10.420.10:FF:000001">
    <property type="entry name" value="Protein-export chaperone SecB"/>
    <property type="match status" value="1"/>
</dbReference>
<dbReference type="Gene3D" id="3.10.420.10">
    <property type="entry name" value="SecB-like"/>
    <property type="match status" value="1"/>
</dbReference>
<dbReference type="HAMAP" id="MF_00821">
    <property type="entry name" value="SecB"/>
    <property type="match status" value="1"/>
</dbReference>
<dbReference type="InterPro" id="IPR003708">
    <property type="entry name" value="SecB"/>
</dbReference>
<dbReference type="InterPro" id="IPR035958">
    <property type="entry name" value="SecB-like_sf"/>
</dbReference>
<dbReference type="NCBIfam" id="NF004390">
    <property type="entry name" value="PRK05751.1-1"/>
    <property type="match status" value="1"/>
</dbReference>
<dbReference type="NCBIfam" id="NF004393">
    <property type="entry name" value="PRK05751.1-4"/>
    <property type="match status" value="1"/>
</dbReference>
<dbReference type="NCBIfam" id="TIGR00809">
    <property type="entry name" value="secB"/>
    <property type="match status" value="1"/>
</dbReference>
<dbReference type="PANTHER" id="PTHR36918">
    <property type="match status" value="1"/>
</dbReference>
<dbReference type="PANTHER" id="PTHR36918:SF1">
    <property type="entry name" value="PROTEIN-EXPORT PROTEIN SECB"/>
    <property type="match status" value="1"/>
</dbReference>
<dbReference type="Pfam" id="PF02556">
    <property type="entry name" value="SecB"/>
    <property type="match status" value="1"/>
</dbReference>
<dbReference type="PRINTS" id="PR01594">
    <property type="entry name" value="SECBCHAPRONE"/>
</dbReference>
<dbReference type="SUPFAM" id="SSF54611">
    <property type="entry name" value="SecB-like"/>
    <property type="match status" value="1"/>
</dbReference>
<evidence type="ECO:0000255" key="1">
    <source>
        <dbReference type="HAMAP-Rule" id="MF_00821"/>
    </source>
</evidence>
<evidence type="ECO:0000305" key="2"/>
<feature type="chain" id="PRO_0000318222" description="Protein-export protein SecB">
    <location>
        <begin position="1"/>
        <end position="155"/>
    </location>
</feature>
<accession>A7MID6</accession>
<organism>
    <name type="scientific">Cronobacter sakazakii (strain ATCC BAA-894)</name>
    <name type="common">Enterobacter sakazakii</name>
    <dbReference type="NCBI Taxonomy" id="290339"/>
    <lineage>
        <taxon>Bacteria</taxon>
        <taxon>Pseudomonadati</taxon>
        <taxon>Pseudomonadota</taxon>
        <taxon>Gammaproteobacteria</taxon>
        <taxon>Enterobacterales</taxon>
        <taxon>Enterobacteriaceae</taxon>
        <taxon>Cronobacter</taxon>
    </lineage>
</organism>
<reference key="1">
    <citation type="journal article" date="2010" name="PLoS ONE">
        <title>Genome sequence of Cronobacter sakazakii BAA-894 and comparative genomic hybridization analysis with other Cronobacter species.</title>
        <authorList>
            <person name="Kucerova E."/>
            <person name="Clifton S.W."/>
            <person name="Xia X.Q."/>
            <person name="Long F."/>
            <person name="Porwollik S."/>
            <person name="Fulton L."/>
            <person name="Fronick C."/>
            <person name="Minx P."/>
            <person name="Kyung K."/>
            <person name="Warren W."/>
            <person name="Fulton R."/>
            <person name="Feng D."/>
            <person name="Wollam A."/>
            <person name="Shah N."/>
            <person name="Bhonagiri V."/>
            <person name="Nash W.E."/>
            <person name="Hallsworth-Pepin K."/>
            <person name="Wilson R.K."/>
            <person name="McClelland M."/>
            <person name="Forsythe S.J."/>
        </authorList>
    </citation>
    <scope>NUCLEOTIDE SEQUENCE [LARGE SCALE GENOMIC DNA]</scope>
    <source>
        <strain>ATCC BAA-894</strain>
    </source>
</reference>